<dbReference type="EC" id="1.17.2.2"/>
<dbReference type="EMBL" id="AJ318095">
    <property type="protein sequence ID" value="CAC67410.1"/>
    <property type="molecule type" value="Genomic_DNA"/>
</dbReference>
<dbReference type="SMR" id="Q934G0"/>
<dbReference type="KEGG" id="ag:CAC67410"/>
<dbReference type="BRENDA" id="1.17.2.2">
    <property type="organism ID" value="5085"/>
</dbReference>
<dbReference type="GO" id="GO:0042597">
    <property type="term" value="C:periplasmic space"/>
    <property type="evidence" value="ECO:0007669"/>
    <property type="project" value="UniProtKB-SubCell"/>
</dbReference>
<dbReference type="GO" id="GO:0052934">
    <property type="term" value="F:alcohol dehydrogenase (cytochrome c) activity"/>
    <property type="evidence" value="ECO:0000314"/>
    <property type="project" value="UniProtKB"/>
</dbReference>
<dbReference type="GO" id="GO:0009055">
    <property type="term" value="F:electron transfer activity"/>
    <property type="evidence" value="ECO:0007669"/>
    <property type="project" value="InterPro"/>
</dbReference>
<dbReference type="GO" id="GO:0020037">
    <property type="term" value="F:heme binding"/>
    <property type="evidence" value="ECO:0000314"/>
    <property type="project" value="UniProtKB"/>
</dbReference>
<dbReference type="GO" id="GO:0046872">
    <property type="term" value="F:metal ion binding"/>
    <property type="evidence" value="ECO:0007669"/>
    <property type="project" value="UniProtKB-KW"/>
</dbReference>
<dbReference type="CDD" id="cd10279">
    <property type="entry name" value="PQQ_ADH_II"/>
    <property type="match status" value="1"/>
</dbReference>
<dbReference type="Gene3D" id="1.10.760.10">
    <property type="entry name" value="Cytochrome c-like domain"/>
    <property type="match status" value="1"/>
</dbReference>
<dbReference type="Gene3D" id="2.140.10.10">
    <property type="entry name" value="Quinoprotein alcohol dehydrogenase-like superfamily"/>
    <property type="match status" value="1"/>
</dbReference>
<dbReference type="InterPro" id="IPR009056">
    <property type="entry name" value="Cyt_c-like_dom"/>
</dbReference>
<dbReference type="InterPro" id="IPR036909">
    <property type="entry name" value="Cyt_c-like_dom_sf"/>
</dbReference>
<dbReference type="InterPro" id="IPR018391">
    <property type="entry name" value="PQQ_b-propeller_rpt"/>
</dbReference>
<dbReference type="InterPro" id="IPR002372">
    <property type="entry name" value="PQQ_rpt_dom"/>
</dbReference>
<dbReference type="InterPro" id="IPR011047">
    <property type="entry name" value="Quinoprotein_ADH-like_sf"/>
</dbReference>
<dbReference type="PANTHER" id="PTHR32303">
    <property type="entry name" value="QUINOPROTEIN ALCOHOL DEHYDROGENASE (CYTOCHROME C)"/>
    <property type="match status" value="1"/>
</dbReference>
<dbReference type="Pfam" id="PF13442">
    <property type="entry name" value="Cytochrome_CBB3"/>
    <property type="match status" value="1"/>
</dbReference>
<dbReference type="Pfam" id="PF01011">
    <property type="entry name" value="PQQ"/>
    <property type="match status" value="2"/>
</dbReference>
<dbReference type="SMART" id="SM00564">
    <property type="entry name" value="PQQ"/>
    <property type="match status" value="6"/>
</dbReference>
<dbReference type="SUPFAM" id="SSF46626">
    <property type="entry name" value="Cytochrome c"/>
    <property type="match status" value="1"/>
</dbReference>
<dbReference type="SUPFAM" id="SSF50998">
    <property type="entry name" value="Quinoprotein alcohol dehydrogenase-like"/>
    <property type="match status" value="1"/>
</dbReference>
<dbReference type="PROSITE" id="PS51007">
    <property type="entry name" value="CYTC"/>
    <property type="match status" value="1"/>
</dbReference>
<sequence length="695" mass="74956">MSANKNIWIIRLGVAFVCVAIGAAQANEKDGSAVTSGNWSLLGGGNEQHYFSALKDVNKSNVKNLGLSWFTDMEAGDGLVGNPLVADGVIYQGGPPGKIYANDLKTGKNLWTYTPEVQYDKDTSWTGFWGTHVNRGLAVDDDNVYIGSYCKLLAVSRTTHKLTWSSQSCDPKKMQAITGAPRVGGGKVFIGNASGDFGGDRGHLDAFDAKTGKHLWRFYTMPGDPSKPFENDLLAKASKTWGTDYWKYTKGGVSPWDAITYDEASDTLYFGTDGPSPWSPAQRAPDAGDELFSHSIIAVDASTGAYKWHFQTVQNDGSNMSATMHIMLADLPVEGVSKRVVMTAPKNGYFYVLDASTGKFISADHYVPVNWTKGLDPKTGRPIPSNEANYWERPGEMTIPLPGDVGGHNWEAMAYNPELRTVYIPSTLVPVTVVASKDTGELDLDYYYGMRPDATIKTQGDLVAWDPLLQKEKWRAKRSLPVNGGVLATAGGLVFQGTGDGHFEAFDANTGEKLWSFHVGGSILAAPTTVEVDGDQYLIVASGNGGASGMRGIPRLMNNLQSQGPARLLAFRLGGKTELPITSTPDFPKPQYPKPTSAMAESGRHIFNANACGACHGFNAEGSTPGLPDLRRSDKLDLAVMKSIVIDGAFKPLGMPGHPHISDADLQALQAFILQKAWTAYDTQQTLKTSDTGAQ</sequence>
<gene>
    <name type="primary">luh</name>
</gene>
<feature type="signal peptide">
    <location>
        <begin position="1"/>
        <end position="26"/>
    </location>
</feature>
<feature type="chain" id="PRO_5000067658" description="Lupanine 17-hydroxylase [cytochrome c]">
    <location>
        <begin position="27"/>
        <end position="695"/>
    </location>
</feature>
<feature type="domain" description="Cytochrome c" evidence="1">
    <location>
        <begin position="598"/>
        <end position="677"/>
    </location>
</feature>
<feature type="binding site" description="covalent" evidence="1">
    <location>
        <position position="612"/>
    </location>
    <ligand>
        <name>heme c</name>
        <dbReference type="ChEBI" id="CHEBI:61717"/>
    </ligand>
</feature>
<feature type="binding site" description="covalent" evidence="1">
    <location>
        <position position="615"/>
    </location>
    <ligand>
        <name>heme c</name>
        <dbReference type="ChEBI" id="CHEBI:61717"/>
    </ligand>
</feature>
<feature type="binding site" description="axial binding residue" evidence="1">
    <location>
        <position position="616"/>
    </location>
    <ligand>
        <name>heme c</name>
        <dbReference type="ChEBI" id="CHEBI:61717"/>
    </ligand>
    <ligandPart>
        <name>Fe</name>
        <dbReference type="ChEBI" id="CHEBI:18248"/>
    </ligandPart>
</feature>
<name>LUH_PSESP</name>
<accession>Q934G0</accession>
<organism>
    <name type="scientific">Pseudomonas sp</name>
    <dbReference type="NCBI Taxonomy" id="306"/>
    <lineage>
        <taxon>Bacteria</taxon>
        <taxon>Pseudomonadati</taxon>
        <taxon>Pseudomonadota</taxon>
        <taxon>Gammaproteobacteria</taxon>
        <taxon>Pseudomonadales</taxon>
        <taxon>Pseudomonadaceae</taxon>
        <taxon>Pseudomonas</taxon>
    </lineage>
</organism>
<reference key="1">
    <citation type="submission" date="2001-06" db="EMBL/GenBank/DDBJ databases">
        <title>Cloning, sequencing and analysis of the gene for lupanine hydroxylase, a quinocytochrome c from a Pseudomonas sp.</title>
        <authorList>
            <person name="Hopper D.J."/>
            <person name="Kaderbhai M.A."/>
            <person name="Little A.R."/>
            <person name="Marriott S.A."/>
            <person name="Young M."/>
            <person name="Rogozinski J."/>
        </authorList>
    </citation>
    <scope>NUCLEOTIDE SEQUENCE [GENOMIC DNA]</scope>
</reference>
<reference key="2">
    <citation type="journal article" date="2003" name="Biochim. Biophys. Acta">
        <title>The quinohaemoprotein lupanine hydroxylase from Pseudomonas putida.</title>
        <authorList>
            <person name="Hopper D.J."/>
            <person name="Kaderbhai M.A."/>
        </authorList>
    </citation>
    <scope>PARTIAL PROTEIN SEQUENCE</scope>
    <scope>SUBCELLULAR LOCATION</scope>
    <scope>BIOPHYSICOCHEMICAL PROPERTIES</scope>
    <scope>SUBUNIT</scope>
    <scope>COFACTOR</scope>
    <source>
        <strain>DH2001</strain>
    </source>
</reference>
<reference key="3">
    <citation type="journal article" date="1991" name="Biochem. J.">
        <title>Lupanine hydroxylase, a quinocytochrome c from an alkaloid-degrading Pseudomonas sp.</title>
        <authorList>
            <person name="Hopper D.J."/>
            <person name="Rogozinski J."/>
            <person name="Toczko M."/>
        </authorList>
    </citation>
    <scope>FUNCTION AS A LUPANINE 17-HYDROXYLASE</scope>
    <scope>BIOPHYSICOCHEMICAL PROPERTIES</scope>
    <scope>SUBUNIT</scope>
    <scope>COFACTOR</scope>
    <source>
        <strain>DH2001</strain>
    </source>
</reference>
<proteinExistence type="evidence at protein level"/>
<keyword id="KW-0903">Direct protein sequencing</keyword>
<keyword id="KW-0349">Heme</keyword>
<keyword id="KW-0408">Iron</keyword>
<keyword id="KW-0479">Metal-binding</keyword>
<keyword id="KW-0560">Oxidoreductase</keyword>
<keyword id="KW-0574">Periplasm</keyword>
<keyword id="KW-0634">PQQ</keyword>
<keyword id="KW-0732">Signal</keyword>
<evidence type="ECO:0000255" key="1">
    <source>
        <dbReference type="PROSITE-ProRule" id="PRU00433"/>
    </source>
</evidence>
<evidence type="ECO:0000269" key="2">
    <source>
    </source>
</evidence>
<evidence type="ECO:0000269" key="3">
    <source>
    </source>
</evidence>
<evidence type="ECO:0000305" key="4"/>
<comment type="function">
    <text evidence="3">Catalyzes the first reaction in the catabolism of the alkaloid lupanine. It dehydrogenates lupanine, which can then be hydrated to produce 17-hydroxylupanine.</text>
</comment>
<comment type="catalytic activity">
    <reaction>
        <text>lupanine + 2 Fe(III)-[cytochrome c] + H2O = 17-hydroxylupanine + 2 Fe(II)-[cytochrome c] + 2 H(+)</text>
        <dbReference type="Rhea" id="RHEA:32643"/>
        <dbReference type="Rhea" id="RHEA-COMP:10350"/>
        <dbReference type="Rhea" id="RHEA-COMP:14399"/>
        <dbReference type="ChEBI" id="CHEBI:15377"/>
        <dbReference type="ChEBI" id="CHEBI:15378"/>
        <dbReference type="ChEBI" id="CHEBI:29033"/>
        <dbReference type="ChEBI" id="CHEBI:29034"/>
        <dbReference type="ChEBI" id="CHEBI:64261"/>
        <dbReference type="ChEBI" id="CHEBI:64262"/>
        <dbReference type="EC" id="1.17.2.2"/>
    </reaction>
</comment>
<comment type="cofactor">
    <cofactor>
        <name>pyrroloquinoline quinone</name>
        <dbReference type="ChEBI" id="CHEBI:58442"/>
    </cofactor>
    <text>Binds 1 PQQ group per subunit.</text>
</comment>
<comment type="cofactor">
    <cofactor>
        <name>heme c</name>
        <dbReference type="ChEBI" id="CHEBI:61717"/>
    </cofactor>
    <text>Binds 1 heme c group covalently per subunit.</text>
</comment>
<comment type="biophysicochemical properties">
    <kinetics>
        <KM evidence="2 3">0.87 uM for sparteine (at 25 degrees Celsius and at pH 8.5)</KM>
        <KM evidence="2 3">3.6 uM for lupanine (at 25 degrees Celsius and at pH 8.5)</KM>
        <KM evidence="2 3">21.3 uM for cytochrome C (at 25 degrees Celsius and at pH 8.5)</KM>
        <text>kcat is 217 sec(-1) with lupanine as substrate and 11.8 sec(-1) with sparteine as substrate.</text>
    </kinetics>
</comment>
<comment type="subunit">
    <text evidence="2 3">Monomer.</text>
</comment>
<comment type="subcellular location">
    <subcellularLocation>
        <location evidence="2">Periplasm</location>
    </subcellularLocation>
</comment>
<comment type="similarity">
    <text evidence="4">Belongs to the bacterial PQQ dehydrogenase family.</text>
</comment>
<protein>
    <recommendedName>
        <fullName>Lupanine 17-hydroxylase [cytochrome c]</fullName>
        <ecNumber>1.17.2.2</ecNumber>
    </recommendedName>
    <alternativeName>
        <fullName>Quinohemoprotein lupanine hydroxylase</fullName>
    </alternativeName>
</protein>